<keyword id="KW-1003">Cell membrane</keyword>
<keyword id="KW-0169">Cobalamin biosynthesis</keyword>
<keyword id="KW-0472">Membrane</keyword>
<keyword id="KW-1185">Reference proteome</keyword>
<keyword id="KW-0812">Transmembrane</keyword>
<keyword id="KW-1133">Transmembrane helix</keyword>
<evidence type="ECO:0000255" key="1">
    <source>
        <dbReference type="HAMAP-Rule" id="MF_00024"/>
    </source>
</evidence>
<organism>
    <name type="scientific">Sinorhizobium fredii (strain NBRC 101917 / NGR234)</name>
    <dbReference type="NCBI Taxonomy" id="394"/>
    <lineage>
        <taxon>Bacteria</taxon>
        <taxon>Pseudomonadati</taxon>
        <taxon>Pseudomonadota</taxon>
        <taxon>Alphaproteobacteria</taxon>
        <taxon>Hyphomicrobiales</taxon>
        <taxon>Rhizobiaceae</taxon>
        <taxon>Sinorhizobium/Ensifer group</taxon>
        <taxon>Sinorhizobium</taxon>
    </lineage>
</organism>
<comment type="function">
    <text evidence="1">Converts cobyric acid to cobinamide by the addition of aminopropanol on the F carboxylic group.</text>
</comment>
<comment type="pathway">
    <text evidence="1">Cofactor biosynthesis; adenosylcobalamin biosynthesis.</text>
</comment>
<comment type="subcellular location">
    <subcellularLocation>
        <location evidence="1">Cell membrane</location>
        <topology evidence="1">Multi-pass membrane protein</topology>
    </subcellularLocation>
</comment>
<comment type="similarity">
    <text evidence="1">Belongs to the CobD/CbiB family.</text>
</comment>
<name>COBD_SINFN</name>
<reference key="1">
    <citation type="journal article" date="2009" name="Appl. Environ. Microbiol.">
        <title>Rhizobium sp. strain NGR234 possesses a remarkable number of secretion systems.</title>
        <authorList>
            <person name="Schmeisser C."/>
            <person name="Liesegang H."/>
            <person name="Krysciak D."/>
            <person name="Bakkou N."/>
            <person name="Le Quere A."/>
            <person name="Wollherr A."/>
            <person name="Heinemeyer I."/>
            <person name="Morgenstern B."/>
            <person name="Pommerening-Roeser A."/>
            <person name="Flores M."/>
            <person name="Palacios R."/>
            <person name="Brenner S."/>
            <person name="Gottschalk G."/>
            <person name="Schmitz R.A."/>
            <person name="Broughton W.J."/>
            <person name="Perret X."/>
            <person name="Strittmatter A.W."/>
            <person name="Streit W.R."/>
        </authorList>
    </citation>
    <scope>NUCLEOTIDE SEQUENCE [LARGE SCALE GENOMIC DNA]</scope>
    <source>
        <strain>NBRC 101917 / NGR234</strain>
    </source>
</reference>
<dbReference type="EMBL" id="CP001389">
    <property type="protein sequence ID" value="ACP25576.1"/>
    <property type="molecule type" value="Genomic_DNA"/>
</dbReference>
<dbReference type="RefSeq" id="WP_012708342.1">
    <property type="nucleotide sequence ID" value="NC_012587.1"/>
</dbReference>
<dbReference type="RefSeq" id="YP_002826329.1">
    <property type="nucleotide sequence ID" value="NC_012587.1"/>
</dbReference>
<dbReference type="STRING" id="394.NGR_c18120"/>
<dbReference type="KEGG" id="rhi:NGR_c18120"/>
<dbReference type="PATRIC" id="fig|394.7.peg.4639"/>
<dbReference type="eggNOG" id="COG1270">
    <property type="taxonomic scope" value="Bacteria"/>
</dbReference>
<dbReference type="HOGENOM" id="CLU_054212_0_1_5"/>
<dbReference type="OrthoDB" id="9811967at2"/>
<dbReference type="UniPathway" id="UPA00148"/>
<dbReference type="Proteomes" id="UP000001054">
    <property type="component" value="Chromosome"/>
</dbReference>
<dbReference type="GO" id="GO:0005886">
    <property type="term" value="C:plasma membrane"/>
    <property type="evidence" value="ECO:0007669"/>
    <property type="project" value="UniProtKB-SubCell"/>
</dbReference>
<dbReference type="GO" id="GO:0015420">
    <property type="term" value="F:ABC-type vitamin B12 transporter activity"/>
    <property type="evidence" value="ECO:0007669"/>
    <property type="project" value="UniProtKB-UniRule"/>
</dbReference>
<dbReference type="GO" id="GO:0048472">
    <property type="term" value="F:threonine-phosphate decarboxylase activity"/>
    <property type="evidence" value="ECO:0007669"/>
    <property type="project" value="InterPro"/>
</dbReference>
<dbReference type="GO" id="GO:0009236">
    <property type="term" value="P:cobalamin biosynthetic process"/>
    <property type="evidence" value="ECO:0007669"/>
    <property type="project" value="UniProtKB-UniRule"/>
</dbReference>
<dbReference type="HAMAP" id="MF_00024">
    <property type="entry name" value="CobD_CbiB"/>
    <property type="match status" value="1"/>
</dbReference>
<dbReference type="InterPro" id="IPR004485">
    <property type="entry name" value="Cobalamin_biosynth_CobD/CbiB"/>
</dbReference>
<dbReference type="NCBIfam" id="TIGR00380">
    <property type="entry name" value="cobal_cbiB"/>
    <property type="match status" value="1"/>
</dbReference>
<dbReference type="PANTHER" id="PTHR34308">
    <property type="entry name" value="COBALAMIN BIOSYNTHESIS PROTEIN CBIB"/>
    <property type="match status" value="1"/>
</dbReference>
<dbReference type="PANTHER" id="PTHR34308:SF1">
    <property type="entry name" value="COBALAMIN BIOSYNTHESIS PROTEIN CBIB"/>
    <property type="match status" value="1"/>
</dbReference>
<dbReference type="Pfam" id="PF03186">
    <property type="entry name" value="CobD_Cbib"/>
    <property type="match status" value="1"/>
</dbReference>
<gene>
    <name evidence="1" type="primary">cobD</name>
    <name type="ordered locus">NGR_c18120</name>
</gene>
<sequence length="326" mass="34502">MSIEIFLVLVVALIIDRLVGDPDWLWERLTHPVVFFGKAIGVFDEALNRGADGGWLKMRGVATILILLAASILLGVVLNRLFDVLGAVGFILEAITVAVFLAQKSLADHVRRVADGLRSNGLEGGREAVSMIVGRDPKTLDEPGVCRAAIESLAENFSDGVVAPALWYAVAGLPGLLAYKMLNTADSMIGHKSPKYLHFGWASARLDDLANLPAARLSVFLIAAGARFKRGVEAAKAAIDVAKRDHGFHRSPNSGWPEAAMAGALDIQLAGPRVYGGVTVDEPMINGAGRAIATADDIDAAVAVFYRACTTLAAASAVLVLPFLLL</sequence>
<accession>C3MDQ7</accession>
<protein>
    <recommendedName>
        <fullName evidence="1">Cobalamin biosynthesis protein CobD</fullName>
    </recommendedName>
</protein>
<feature type="chain" id="PRO_1000116894" description="Cobalamin biosynthesis protein CobD">
    <location>
        <begin position="1"/>
        <end position="326"/>
    </location>
</feature>
<feature type="transmembrane region" description="Helical" evidence="1">
    <location>
        <begin position="58"/>
        <end position="78"/>
    </location>
</feature>
<feature type="transmembrane region" description="Helical" evidence="1">
    <location>
        <begin position="81"/>
        <end position="101"/>
    </location>
</feature>
<feature type="transmembrane region" description="Helical" evidence="1">
    <location>
        <begin position="157"/>
        <end position="177"/>
    </location>
</feature>
<feature type="transmembrane region" description="Helical" evidence="1">
    <location>
        <begin position="304"/>
        <end position="324"/>
    </location>
</feature>
<proteinExistence type="inferred from homology"/>